<proteinExistence type="inferred from homology"/>
<comment type="function">
    <text evidence="1">Binds as a heterodimer with protein bS6 to the central domain of the 16S rRNA, where it helps stabilize the platform of the 30S subunit.</text>
</comment>
<comment type="subunit">
    <text evidence="1">Part of the 30S ribosomal subunit. Forms a tight heterodimer with protein bS6.</text>
</comment>
<comment type="similarity">
    <text evidence="1">Belongs to the bacterial ribosomal protein bS18 family.</text>
</comment>
<dbReference type="EMBL" id="CP001144">
    <property type="protein sequence ID" value="ACH74539.1"/>
    <property type="molecule type" value="Genomic_DNA"/>
</dbReference>
<dbReference type="RefSeq" id="WP_000135199.1">
    <property type="nucleotide sequence ID" value="NC_011205.1"/>
</dbReference>
<dbReference type="SMR" id="B5FSA3"/>
<dbReference type="GeneID" id="98186237"/>
<dbReference type="KEGG" id="sed:SeD_A4789"/>
<dbReference type="HOGENOM" id="CLU_148710_2_3_6"/>
<dbReference type="Proteomes" id="UP000008322">
    <property type="component" value="Chromosome"/>
</dbReference>
<dbReference type="GO" id="GO:0022627">
    <property type="term" value="C:cytosolic small ribosomal subunit"/>
    <property type="evidence" value="ECO:0007669"/>
    <property type="project" value="TreeGrafter"/>
</dbReference>
<dbReference type="GO" id="GO:0070181">
    <property type="term" value="F:small ribosomal subunit rRNA binding"/>
    <property type="evidence" value="ECO:0007669"/>
    <property type="project" value="TreeGrafter"/>
</dbReference>
<dbReference type="GO" id="GO:0003735">
    <property type="term" value="F:structural constituent of ribosome"/>
    <property type="evidence" value="ECO:0007669"/>
    <property type="project" value="InterPro"/>
</dbReference>
<dbReference type="GO" id="GO:0006412">
    <property type="term" value="P:translation"/>
    <property type="evidence" value="ECO:0007669"/>
    <property type="project" value="UniProtKB-UniRule"/>
</dbReference>
<dbReference type="FunFam" id="4.10.640.10:FF:000001">
    <property type="entry name" value="30S ribosomal protein S18"/>
    <property type="match status" value="1"/>
</dbReference>
<dbReference type="Gene3D" id="4.10.640.10">
    <property type="entry name" value="Ribosomal protein S18"/>
    <property type="match status" value="1"/>
</dbReference>
<dbReference type="HAMAP" id="MF_00270">
    <property type="entry name" value="Ribosomal_bS18"/>
    <property type="match status" value="1"/>
</dbReference>
<dbReference type="InterPro" id="IPR001648">
    <property type="entry name" value="Ribosomal_bS18"/>
</dbReference>
<dbReference type="InterPro" id="IPR018275">
    <property type="entry name" value="Ribosomal_bS18_CS"/>
</dbReference>
<dbReference type="InterPro" id="IPR036870">
    <property type="entry name" value="Ribosomal_bS18_sf"/>
</dbReference>
<dbReference type="NCBIfam" id="TIGR00165">
    <property type="entry name" value="S18"/>
    <property type="match status" value="1"/>
</dbReference>
<dbReference type="PANTHER" id="PTHR13479">
    <property type="entry name" value="30S RIBOSOMAL PROTEIN S18"/>
    <property type="match status" value="1"/>
</dbReference>
<dbReference type="PANTHER" id="PTHR13479:SF40">
    <property type="entry name" value="SMALL RIBOSOMAL SUBUNIT PROTEIN BS18M"/>
    <property type="match status" value="1"/>
</dbReference>
<dbReference type="Pfam" id="PF01084">
    <property type="entry name" value="Ribosomal_S18"/>
    <property type="match status" value="1"/>
</dbReference>
<dbReference type="PRINTS" id="PR00974">
    <property type="entry name" value="RIBOSOMALS18"/>
</dbReference>
<dbReference type="SUPFAM" id="SSF46911">
    <property type="entry name" value="Ribosomal protein S18"/>
    <property type="match status" value="1"/>
</dbReference>
<dbReference type="PROSITE" id="PS00057">
    <property type="entry name" value="RIBOSOMAL_S18"/>
    <property type="match status" value="1"/>
</dbReference>
<organism>
    <name type="scientific">Salmonella dublin (strain CT_02021853)</name>
    <dbReference type="NCBI Taxonomy" id="439851"/>
    <lineage>
        <taxon>Bacteria</taxon>
        <taxon>Pseudomonadati</taxon>
        <taxon>Pseudomonadota</taxon>
        <taxon>Gammaproteobacteria</taxon>
        <taxon>Enterobacterales</taxon>
        <taxon>Enterobacteriaceae</taxon>
        <taxon>Salmonella</taxon>
    </lineage>
</organism>
<keyword id="KW-0687">Ribonucleoprotein</keyword>
<keyword id="KW-0689">Ribosomal protein</keyword>
<keyword id="KW-0694">RNA-binding</keyword>
<keyword id="KW-0699">rRNA-binding</keyword>
<protein>
    <recommendedName>
        <fullName evidence="1">Small ribosomal subunit protein bS18</fullName>
    </recommendedName>
    <alternativeName>
        <fullName evidence="2">30S ribosomal protein S18</fullName>
    </alternativeName>
</protein>
<evidence type="ECO:0000255" key="1">
    <source>
        <dbReference type="HAMAP-Rule" id="MF_00270"/>
    </source>
</evidence>
<evidence type="ECO:0000305" key="2"/>
<sequence>MARYFRRRKFCRFTAEGVQEIDYKDIATLKNYITESGKIVPSRITGTRAKYQRQLARAIKRARYLSLLPYTDRHQ</sequence>
<gene>
    <name evidence="1" type="primary">rpsR</name>
    <name type="ordered locus">SeD_A4789</name>
</gene>
<feature type="chain" id="PRO_1000114444" description="Small ribosomal subunit protein bS18">
    <location>
        <begin position="1"/>
        <end position="75"/>
    </location>
</feature>
<accession>B5FSA3</accession>
<reference key="1">
    <citation type="journal article" date="2011" name="J. Bacteriol.">
        <title>Comparative genomics of 28 Salmonella enterica isolates: evidence for CRISPR-mediated adaptive sublineage evolution.</title>
        <authorList>
            <person name="Fricke W.F."/>
            <person name="Mammel M.K."/>
            <person name="McDermott P.F."/>
            <person name="Tartera C."/>
            <person name="White D.G."/>
            <person name="Leclerc J.E."/>
            <person name="Ravel J."/>
            <person name="Cebula T.A."/>
        </authorList>
    </citation>
    <scope>NUCLEOTIDE SEQUENCE [LARGE SCALE GENOMIC DNA]</scope>
    <source>
        <strain>CT_02021853</strain>
    </source>
</reference>
<name>RS18_SALDC</name>